<sequence length="195" mass="22385">MELNTHNAEILLSAANKSHYPQDELPEIALAGRSNVGKSSFINTMLNRKNLARTSGKPGKTQLLNFFNIDDKMRFVDVPGYGYARVSKKEREKWGRMIEEYLTTRENLRAVVSLVDLRHDPSADDVQMYEFLKYYEIPVIIVATKADKIPRGKWNKHESAIKKKLNFDPSDDFILFSSVSKEGMDEAWDAILEKL</sequence>
<gene>
    <name evidence="1" type="primary">engB</name>
    <name type="ordered locus">SPH_1682</name>
</gene>
<accession>B1ICY8</accession>
<proteinExistence type="inferred from homology"/>
<feature type="chain" id="PRO_1000116008" description="Probable GTP-binding protein EngB">
    <location>
        <begin position="1"/>
        <end position="195"/>
    </location>
</feature>
<feature type="domain" description="EngB-type G" evidence="1">
    <location>
        <begin position="24"/>
        <end position="195"/>
    </location>
</feature>
<feature type="binding site" evidence="1">
    <location>
        <begin position="32"/>
        <end position="39"/>
    </location>
    <ligand>
        <name>GTP</name>
        <dbReference type="ChEBI" id="CHEBI:37565"/>
    </ligand>
</feature>
<feature type="binding site" evidence="1">
    <location>
        <position position="39"/>
    </location>
    <ligand>
        <name>Mg(2+)</name>
        <dbReference type="ChEBI" id="CHEBI:18420"/>
    </ligand>
</feature>
<feature type="binding site" evidence="1">
    <location>
        <begin position="59"/>
        <end position="63"/>
    </location>
    <ligand>
        <name>GTP</name>
        <dbReference type="ChEBI" id="CHEBI:37565"/>
    </ligand>
</feature>
<feature type="binding site" evidence="1">
    <location>
        <position position="61"/>
    </location>
    <ligand>
        <name>Mg(2+)</name>
        <dbReference type="ChEBI" id="CHEBI:18420"/>
    </ligand>
</feature>
<feature type="binding site" evidence="1">
    <location>
        <begin position="77"/>
        <end position="80"/>
    </location>
    <ligand>
        <name>GTP</name>
        <dbReference type="ChEBI" id="CHEBI:37565"/>
    </ligand>
</feature>
<feature type="binding site" evidence="1">
    <location>
        <begin position="144"/>
        <end position="147"/>
    </location>
    <ligand>
        <name>GTP</name>
        <dbReference type="ChEBI" id="CHEBI:37565"/>
    </ligand>
</feature>
<feature type="binding site" evidence="1">
    <location>
        <begin position="176"/>
        <end position="178"/>
    </location>
    <ligand>
        <name>GTP</name>
        <dbReference type="ChEBI" id="CHEBI:37565"/>
    </ligand>
</feature>
<dbReference type="EMBL" id="CP000936">
    <property type="protein sequence ID" value="ACA35721.1"/>
    <property type="molecule type" value="Genomic_DNA"/>
</dbReference>
<dbReference type="RefSeq" id="WP_000422606.1">
    <property type="nucleotide sequence ID" value="NC_010380.1"/>
</dbReference>
<dbReference type="SMR" id="B1ICY8"/>
<dbReference type="KEGG" id="spv:SPH_1682"/>
<dbReference type="HOGENOM" id="CLU_033732_3_0_9"/>
<dbReference type="Proteomes" id="UP000002163">
    <property type="component" value="Chromosome"/>
</dbReference>
<dbReference type="GO" id="GO:0005829">
    <property type="term" value="C:cytosol"/>
    <property type="evidence" value="ECO:0007669"/>
    <property type="project" value="TreeGrafter"/>
</dbReference>
<dbReference type="GO" id="GO:0005525">
    <property type="term" value="F:GTP binding"/>
    <property type="evidence" value="ECO:0007669"/>
    <property type="project" value="UniProtKB-UniRule"/>
</dbReference>
<dbReference type="GO" id="GO:0046872">
    <property type="term" value="F:metal ion binding"/>
    <property type="evidence" value="ECO:0007669"/>
    <property type="project" value="UniProtKB-KW"/>
</dbReference>
<dbReference type="GO" id="GO:0000917">
    <property type="term" value="P:division septum assembly"/>
    <property type="evidence" value="ECO:0007669"/>
    <property type="project" value="UniProtKB-KW"/>
</dbReference>
<dbReference type="CDD" id="cd01876">
    <property type="entry name" value="YihA_EngB"/>
    <property type="match status" value="1"/>
</dbReference>
<dbReference type="FunFam" id="3.40.50.300:FF:000098">
    <property type="entry name" value="Probable GTP-binding protein EngB"/>
    <property type="match status" value="1"/>
</dbReference>
<dbReference type="Gene3D" id="3.40.50.300">
    <property type="entry name" value="P-loop containing nucleotide triphosphate hydrolases"/>
    <property type="match status" value="1"/>
</dbReference>
<dbReference type="HAMAP" id="MF_00321">
    <property type="entry name" value="GTPase_EngB"/>
    <property type="match status" value="1"/>
</dbReference>
<dbReference type="InterPro" id="IPR030393">
    <property type="entry name" value="G_ENGB_dom"/>
</dbReference>
<dbReference type="InterPro" id="IPR006073">
    <property type="entry name" value="GTP-bd"/>
</dbReference>
<dbReference type="InterPro" id="IPR019987">
    <property type="entry name" value="GTP-bd_ribosome_bio_YsxC"/>
</dbReference>
<dbReference type="InterPro" id="IPR027417">
    <property type="entry name" value="P-loop_NTPase"/>
</dbReference>
<dbReference type="NCBIfam" id="TIGR03598">
    <property type="entry name" value="GTPase_YsxC"/>
    <property type="match status" value="1"/>
</dbReference>
<dbReference type="PANTHER" id="PTHR11649:SF13">
    <property type="entry name" value="ENGB-TYPE G DOMAIN-CONTAINING PROTEIN"/>
    <property type="match status" value="1"/>
</dbReference>
<dbReference type="PANTHER" id="PTHR11649">
    <property type="entry name" value="MSS1/TRME-RELATED GTP-BINDING PROTEIN"/>
    <property type="match status" value="1"/>
</dbReference>
<dbReference type="Pfam" id="PF01926">
    <property type="entry name" value="MMR_HSR1"/>
    <property type="match status" value="1"/>
</dbReference>
<dbReference type="PRINTS" id="PR00449">
    <property type="entry name" value="RASTRNSFRMNG"/>
</dbReference>
<dbReference type="SUPFAM" id="SSF52540">
    <property type="entry name" value="P-loop containing nucleoside triphosphate hydrolases"/>
    <property type="match status" value="1"/>
</dbReference>
<dbReference type="PROSITE" id="PS51706">
    <property type="entry name" value="G_ENGB"/>
    <property type="match status" value="1"/>
</dbReference>
<comment type="function">
    <text evidence="1">Necessary for normal cell division and for the maintenance of normal septation.</text>
</comment>
<comment type="cofactor">
    <cofactor evidence="1">
        <name>Mg(2+)</name>
        <dbReference type="ChEBI" id="CHEBI:18420"/>
    </cofactor>
</comment>
<comment type="similarity">
    <text evidence="1">Belongs to the TRAFAC class TrmE-Era-EngA-EngB-Septin-like GTPase superfamily. EngB GTPase family.</text>
</comment>
<organism>
    <name type="scientific">Streptococcus pneumoniae (strain Hungary19A-6)</name>
    <dbReference type="NCBI Taxonomy" id="487214"/>
    <lineage>
        <taxon>Bacteria</taxon>
        <taxon>Bacillati</taxon>
        <taxon>Bacillota</taxon>
        <taxon>Bacilli</taxon>
        <taxon>Lactobacillales</taxon>
        <taxon>Streptococcaceae</taxon>
        <taxon>Streptococcus</taxon>
    </lineage>
</organism>
<reference key="1">
    <citation type="journal article" date="2010" name="Genome Biol.">
        <title>Structure and dynamics of the pan-genome of Streptococcus pneumoniae and closely related species.</title>
        <authorList>
            <person name="Donati C."/>
            <person name="Hiller N.L."/>
            <person name="Tettelin H."/>
            <person name="Muzzi A."/>
            <person name="Croucher N.J."/>
            <person name="Angiuoli S.V."/>
            <person name="Oggioni M."/>
            <person name="Dunning Hotopp J.C."/>
            <person name="Hu F.Z."/>
            <person name="Riley D.R."/>
            <person name="Covacci A."/>
            <person name="Mitchell T.J."/>
            <person name="Bentley S.D."/>
            <person name="Kilian M."/>
            <person name="Ehrlich G.D."/>
            <person name="Rappuoli R."/>
            <person name="Moxon E.R."/>
            <person name="Masignani V."/>
        </authorList>
    </citation>
    <scope>NUCLEOTIDE SEQUENCE [LARGE SCALE GENOMIC DNA]</scope>
    <source>
        <strain>Hungary19A-6</strain>
    </source>
</reference>
<protein>
    <recommendedName>
        <fullName evidence="1">Probable GTP-binding protein EngB</fullName>
    </recommendedName>
</protein>
<evidence type="ECO:0000255" key="1">
    <source>
        <dbReference type="HAMAP-Rule" id="MF_00321"/>
    </source>
</evidence>
<keyword id="KW-0131">Cell cycle</keyword>
<keyword id="KW-0132">Cell division</keyword>
<keyword id="KW-0342">GTP-binding</keyword>
<keyword id="KW-0460">Magnesium</keyword>
<keyword id="KW-0479">Metal-binding</keyword>
<keyword id="KW-0547">Nucleotide-binding</keyword>
<keyword id="KW-0717">Septation</keyword>
<name>ENGB_STRPI</name>